<proteinExistence type="inferred from homology"/>
<sequence length="91" mass="10272">MIENILIIDNYDSFTYNLYQYVGEISPNIEVYRNDKITLEKIEEMNPTHIIISPGPGFPKDAGICIEAIRKFGRYIPILGVCLGHQAIGEA</sequence>
<feature type="chain" id="PRO_0000056875" description="Anthranilate synthase component 2">
    <location>
        <begin position="1"/>
        <end position="91" status="greater than"/>
    </location>
</feature>
<feature type="domain" description="Glutamine amidotransferase type-1" evidence="3">
    <location>
        <begin position="4"/>
        <end position="91" status="greater than"/>
    </location>
</feature>
<feature type="active site" description="Nucleophile; for GATase activity" evidence="3">
    <location>
        <position position="82"/>
    </location>
</feature>
<feature type="binding site" evidence="2">
    <location>
        <begin position="55"/>
        <end position="57"/>
    </location>
    <ligand>
        <name>L-glutamine</name>
        <dbReference type="ChEBI" id="CHEBI:58359"/>
    </ligand>
</feature>
<feature type="binding site" evidence="2">
    <location>
        <position position="86"/>
    </location>
    <ligand>
        <name>L-glutamine</name>
        <dbReference type="ChEBI" id="CHEBI:58359"/>
    </ligand>
</feature>
<feature type="non-terminal residue">
    <location>
        <position position="91"/>
    </location>
</feature>
<keyword id="KW-0028">Amino-acid biosynthesis</keyword>
<keyword id="KW-0057">Aromatic amino acid biosynthesis</keyword>
<keyword id="KW-0315">Glutamine amidotransferase</keyword>
<keyword id="KW-0456">Lyase</keyword>
<keyword id="KW-0822">Tryptophan biosynthesis</keyword>
<organism>
    <name type="scientific">Acetivibrio thermocellus</name>
    <name type="common">Hungateiclostridium thermocellum</name>
    <name type="synonym">Clostridium thermocellum</name>
    <dbReference type="NCBI Taxonomy" id="1515"/>
    <lineage>
        <taxon>Bacteria</taxon>
        <taxon>Bacillati</taxon>
        <taxon>Bacillota</taxon>
        <taxon>Clostridia</taxon>
        <taxon>Eubacteriales</taxon>
        <taxon>Oscillospiraceae</taxon>
        <taxon>Acetivibrio</taxon>
    </lineage>
</organism>
<accession>P14952</accession>
<dbReference type="EC" id="4.1.3.27"/>
<dbReference type="EMBL" id="D00399">
    <property type="protein sequence ID" value="BAA00301.1"/>
    <property type="molecule type" value="Genomic_DNA"/>
</dbReference>
<dbReference type="PIR" id="PT0065">
    <property type="entry name" value="PT0065"/>
</dbReference>
<dbReference type="SMR" id="P14952"/>
<dbReference type="UniPathway" id="UPA00035">
    <property type="reaction ID" value="UER00040"/>
</dbReference>
<dbReference type="GO" id="GO:0005829">
    <property type="term" value="C:cytosol"/>
    <property type="evidence" value="ECO:0007669"/>
    <property type="project" value="TreeGrafter"/>
</dbReference>
<dbReference type="GO" id="GO:0004049">
    <property type="term" value="F:anthranilate synthase activity"/>
    <property type="evidence" value="ECO:0007669"/>
    <property type="project" value="UniProtKB-EC"/>
</dbReference>
<dbReference type="GO" id="GO:0000162">
    <property type="term" value="P:L-tryptophan biosynthetic process"/>
    <property type="evidence" value="ECO:0007669"/>
    <property type="project" value="UniProtKB-UniPathway"/>
</dbReference>
<dbReference type="CDD" id="cd01743">
    <property type="entry name" value="GATase1_Anthranilate_Synthase"/>
    <property type="match status" value="1"/>
</dbReference>
<dbReference type="Gene3D" id="3.40.50.880">
    <property type="match status" value="1"/>
</dbReference>
<dbReference type="InterPro" id="IPR050472">
    <property type="entry name" value="Anth_synth/Amidotransfase"/>
</dbReference>
<dbReference type="InterPro" id="IPR029062">
    <property type="entry name" value="Class_I_gatase-like"/>
</dbReference>
<dbReference type="InterPro" id="IPR017926">
    <property type="entry name" value="GATASE"/>
</dbReference>
<dbReference type="InterPro" id="IPR006221">
    <property type="entry name" value="TrpG/PapA_dom"/>
</dbReference>
<dbReference type="PANTHER" id="PTHR43418:SF4">
    <property type="entry name" value="MULTIFUNCTIONAL TRYPTOPHAN BIOSYNTHESIS PROTEIN"/>
    <property type="match status" value="1"/>
</dbReference>
<dbReference type="PANTHER" id="PTHR43418">
    <property type="entry name" value="MULTIFUNCTIONAL TRYPTOPHAN BIOSYNTHESIS PROTEIN-RELATED"/>
    <property type="match status" value="1"/>
</dbReference>
<dbReference type="Pfam" id="PF00117">
    <property type="entry name" value="GATase"/>
    <property type="match status" value="1"/>
</dbReference>
<dbReference type="PRINTS" id="PR00097">
    <property type="entry name" value="ANTSNTHASEII"/>
</dbReference>
<dbReference type="PRINTS" id="PR00099">
    <property type="entry name" value="CPSGATASE"/>
</dbReference>
<dbReference type="PRINTS" id="PR00096">
    <property type="entry name" value="GATASE"/>
</dbReference>
<dbReference type="SUPFAM" id="SSF52317">
    <property type="entry name" value="Class I glutamine amidotransferase-like"/>
    <property type="match status" value="1"/>
</dbReference>
<dbReference type="PROSITE" id="PS51273">
    <property type="entry name" value="GATASE_TYPE_1"/>
    <property type="match status" value="1"/>
</dbReference>
<name>TRPG_ACETH</name>
<gene>
    <name type="primary">trpG</name>
</gene>
<protein>
    <recommendedName>
        <fullName>Anthranilate synthase component 2</fullName>
        <shortName>AS</shortName>
        <shortName>ASII</shortName>
        <ecNumber>4.1.3.27</ecNumber>
    </recommendedName>
    <alternativeName>
        <fullName>Anthranilate synthase, GATase component</fullName>
    </alternativeName>
    <alternativeName>
        <fullName>Anthranilate synthase, glutamine amidotransferase component</fullName>
    </alternativeName>
</protein>
<comment type="function">
    <text evidence="1">Part of a heterotetrameric complex that catalyzes the two-step biosynthesis of anthranilate, an intermediate in the biosynthesis of L-tryptophan. In the first step, the glutamine-binding beta subunit (TrpG) of anthranilate synthase (AS) provides the glutamine amidotransferase activity which generates ammonia as a substrate that, along with chorismate, is used in the second step, catalyzed by the large alpha subunit of AS (TrpE) to produce anthranilate. In the absence of TrpG, TrpE can synthesize anthranilate directly from chorismate and high concentrations of ammonia (By similarity).</text>
</comment>
<comment type="catalytic activity">
    <reaction>
        <text>chorismate + L-glutamine = anthranilate + pyruvate + L-glutamate + H(+)</text>
        <dbReference type="Rhea" id="RHEA:21732"/>
        <dbReference type="ChEBI" id="CHEBI:15361"/>
        <dbReference type="ChEBI" id="CHEBI:15378"/>
        <dbReference type="ChEBI" id="CHEBI:16567"/>
        <dbReference type="ChEBI" id="CHEBI:29748"/>
        <dbReference type="ChEBI" id="CHEBI:29985"/>
        <dbReference type="ChEBI" id="CHEBI:58359"/>
        <dbReference type="EC" id="4.1.3.27"/>
    </reaction>
</comment>
<comment type="pathway">
    <text>Amino-acid biosynthesis; L-tryptophan biosynthesis; L-tryptophan from chorismate: step 1/5.</text>
</comment>
<comment type="subunit">
    <text evidence="1">Heterotetramer consisting of two non-identical subunits: a beta subunit (TrpG) and a large alpha subunit (TrpE).</text>
</comment>
<reference key="1">
    <citation type="journal article" date="1989" name="J. Biochem.">
        <title>Molecular cloning and the nucleotide sequence of the Clostridium thermocellum trpE gene.</title>
        <authorList>
            <person name="Sato S."/>
            <person name="Nakada Y."/>
            <person name="Hon-Nami K."/>
            <person name="Yasui K."/>
            <person name="Shiratsuchi A."/>
        </authorList>
    </citation>
    <scope>NUCLEOTIDE SEQUENCE [GENOMIC DNA]</scope>
</reference>
<evidence type="ECO:0000250" key="1"/>
<evidence type="ECO:0000250" key="2">
    <source>
        <dbReference type="UniProtKB" id="P00900"/>
    </source>
</evidence>
<evidence type="ECO:0000255" key="3">
    <source>
        <dbReference type="PROSITE-ProRule" id="PRU00605"/>
    </source>
</evidence>